<sequence>MMTYMSFEEAIKTLDSGIIIEIEVTPGSRSLSVPSGYNEWRKRIAVKLTKNAQKGKANEQLIESLAELFGISSSEILINSGATSSKKSLLIKGISYQQAVSVLGARLKE</sequence>
<evidence type="ECO:0000255" key="1">
    <source>
        <dbReference type="HAMAP-Rule" id="MF_00634"/>
    </source>
</evidence>
<evidence type="ECO:0000305" key="2"/>
<accession>Q8TIP5</accession>
<reference key="1">
    <citation type="journal article" date="2002" name="Genome Res.">
        <title>The genome of Methanosarcina acetivorans reveals extensive metabolic and physiological diversity.</title>
        <authorList>
            <person name="Galagan J.E."/>
            <person name="Nusbaum C."/>
            <person name="Roy A."/>
            <person name="Endrizzi M.G."/>
            <person name="Macdonald P."/>
            <person name="FitzHugh W."/>
            <person name="Calvo S."/>
            <person name="Engels R."/>
            <person name="Smirnov S."/>
            <person name="Atnoor D."/>
            <person name="Brown A."/>
            <person name="Allen N."/>
            <person name="Naylor J."/>
            <person name="Stange-Thomann N."/>
            <person name="DeArellano K."/>
            <person name="Johnson R."/>
            <person name="Linton L."/>
            <person name="McEwan P."/>
            <person name="McKernan K."/>
            <person name="Talamas J."/>
            <person name="Tirrell A."/>
            <person name="Ye W."/>
            <person name="Zimmer A."/>
            <person name="Barber R.D."/>
            <person name="Cann I."/>
            <person name="Graham D.E."/>
            <person name="Grahame D.A."/>
            <person name="Guss A.M."/>
            <person name="Hedderich R."/>
            <person name="Ingram-Smith C."/>
            <person name="Kuettner H.C."/>
            <person name="Krzycki J.A."/>
            <person name="Leigh J.A."/>
            <person name="Li W."/>
            <person name="Liu J."/>
            <person name="Mukhopadhyay B."/>
            <person name="Reeve J.N."/>
            <person name="Smith K."/>
            <person name="Springer T.A."/>
            <person name="Umayam L.A."/>
            <person name="White O."/>
            <person name="White R.H."/>
            <person name="de Macario E.C."/>
            <person name="Ferry J.G."/>
            <person name="Jarrell K.F."/>
            <person name="Jing H."/>
            <person name="Macario A.J.L."/>
            <person name="Paulsen I.T."/>
            <person name="Pritchett M."/>
            <person name="Sowers K.R."/>
            <person name="Swanson R.V."/>
            <person name="Zinder S.H."/>
            <person name="Lander E."/>
            <person name="Metcalf W.W."/>
            <person name="Birren B."/>
        </authorList>
    </citation>
    <scope>NUCLEOTIDE SEQUENCE [LARGE SCALE GENOMIC DNA]</scope>
    <source>
        <strain>ATCC 35395 / DSM 2834 / JCM 12185 / C2A</strain>
    </source>
</reference>
<dbReference type="EMBL" id="AE010299">
    <property type="protein sequence ID" value="AAM07445.1"/>
    <property type="status" value="ALT_INIT"/>
    <property type="molecule type" value="Genomic_DNA"/>
</dbReference>
<dbReference type="SMR" id="Q8TIP5"/>
<dbReference type="FunCoup" id="Q8TIP5">
    <property type="interactions" value="4"/>
</dbReference>
<dbReference type="STRING" id="188937.MA_4097"/>
<dbReference type="EnsemblBacteria" id="AAM07445">
    <property type="protein sequence ID" value="AAM07445"/>
    <property type="gene ID" value="MA_4097"/>
</dbReference>
<dbReference type="KEGG" id="mac:MA_4097"/>
<dbReference type="HOGENOM" id="CLU_130694_6_1_2"/>
<dbReference type="InParanoid" id="Q8TIP5"/>
<dbReference type="PhylomeDB" id="Q8TIP5"/>
<dbReference type="Proteomes" id="UP000002487">
    <property type="component" value="Chromosome"/>
</dbReference>
<dbReference type="Gene3D" id="3.30.1200.10">
    <property type="entry name" value="YggU-like"/>
    <property type="match status" value="1"/>
</dbReference>
<dbReference type="HAMAP" id="MF_00634">
    <property type="entry name" value="UPF0235"/>
    <property type="match status" value="1"/>
</dbReference>
<dbReference type="InterPro" id="IPR003746">
    <property type="entry name" value="DUF167"/>
</dbReference>
<dbReference type="InterPro" id="IPR036591">
    <property type="entry name" value="YggU-like_sf"/>
</dbReference>
<dbReference type="NCBIfam" id="TIGR00251">
    <property type="entry name" value="DUF167 family protein"/>
    <property type="match status" value="1"/>
</dbReference>
<dbReference type="Pfam" id="PF02594">
    <property type="entry name" value="DUF167"/>
    <property type="match status" value="1"/>
</dbReference>
<dbReference type="SMART" id="SM01152">
    <property type="entry name" value="DUF167"/>
    <property type="match status" value="1"/>
</dbReference>
<dbReference type="SUPFAM" id="SSF69786">
    <property type="entry name" value="YggU-like"/>
    <property type="match status" value="1"/>
</dbReference>
<name>Y4097_METAC</name>
<comment type="similarity">
    <text evidence="1">Belongs to the UPF0235 family.</text>
</comment>
<comment type="sequence caution" evidence="2">
    <conflict type="erroneous initiation">
        <sequence resource="EMBL-CDS" id="AAM07445"/>
    </conflict>
</comment>
<proteinExistence type="inferred from homology"/>
<organism>
    <name type="scientific">Methanosarcina acetivorans (strain ATCC 35395 / DSM 2834 / JCM 12185 / C2A)</name>
    <dbReference type="NCBI Taxonomy" id="188937"/>
    <lineage>
        <taxon>Archaea</taxon>
        <taxon>Methanobacteriati</taxon>
        <taxon>Methanobacteriota</taxon>
        <taxon>Stenosarchaea group</taxon>
        <taxon>Methanomicrobia</taxon>
        <taxon>Methanosarcinales</taxon>
        <taxon>Methanosarcinaceae</taxon>
        <taxon>Methanosarcina</taxon>
    </lineage>
</organism>
<feature type="chain" id="PRO_0000139467" description="UPF0235 protein MA_4097">
    <location>
        <begin position="1"/>
        <end position="109"/>
    </location>
</feature>
<keyword id="KW-1185">Reference proteome</keyword>
<protein>
    <recommendedName>
        <fullName evidence="1">UPF0235 protein MA_4097</fullName>
    </recommendedName>
</protein>
<gene>
    <name type="ordered locus">MA_4097</name>
</gene>